<keyword id="KW-0963">Cytoplasm</keyword>
<keyword id="KW-0378">Hydrolase</keyword>
<keyword id="KW-0460">Magnesium</keyword>
<keyword id="KW-0464">Manganese</keyword>
<keyword id="KW-0479">Metal-binding</keyword>
<keyword id="KW-0546">Nucleotide metabolism</keyword>
<keyword id="KW-0547">Nucleotide-binding</keyword>
<keyword id="KW-0539">Nucleus</keyword>
<keyword id="KW-1185">Reference proteome</keyword>
<keyword id="KW-0694">RNA-binding</keyword>
<gene>
    <name type="primary">Nudt16</name>
</gene>
<name>NUD16_MOUSE</name>
<sequence length="195" mass="21825">MEGHRKVELSEALALGPDWRHACHALLYAPDPRKLFGRIPMRFAVLMQMRFDGRLGFPGGFVDAQDSCLEDGLNRELREELGEAMSAFRVERSDYRSSHIAARPRVVAHFYAKRLTLEQLQAVEARAPQAKDHGLEVLGLVRVPLYVLRDGEGGLPAFLENSFIGAAREQLLEALQDLKLLDPGIIAKLKIPDSK</sequence>
<feature type="chain" id="PRO_0000057118" description="U8 snoRNA-decapping enzyme">
    <location>
        <begin position="1"/>
        <end position="195"/>
    </location>
</feature>
<feature type="domain" description="Nudix hydrolase" evidence="3">
    <location>
        <begin position="18"/>
        <end position="173"/>
    </location>
</feature>
<feature type="short sequence motif" description="Nudix box">
    <location>
        <begin position="61"/>
        <end position="82"/>
    </location>
</feature>
<feature type="binding site" evidence="1">
    <location>
        <position position="24"/>
    </location>
    <ligand>
        <name>substrate</name>
    </ligand>
</feature>
<feature type="binding site" evidence="1">
    <location>
        <position position="50"/>
    </location>
    <ligand>
        <name>substrate</name>
    </ligand>
</feature>
<feature type="binding site" evidence="2">
    <location>
        <position position="57"/>
    </location>
    <ligand>
        <name>substrate</name>
    </ligand>
</feature>
<feature type="binding site" evidence="2">
    <location>
        <position position="59"/>
    </location>
    <ligand>
        <name>Mn(2+)</name>
        <dbReference type="ChEBI" id="CHEBI:29035"/>
        <label>1</label>
    </ligand>
</feature>
<feature type="binding site" evidence="2">
    <location>
        <position position="76"/>
    </location>
    <ligand>
        <name>Mn(2+)</name>
        <dbReference type="ChEBI" id="CHEBI:29035"/>
        <label>2</label>
    </ligand>
</feature>
<feature type="binding site" evidence="1">
    <location>
        <position position="76"/>
    </location>
    <ligand>
        <name>Mn(2+)</name>
        <dbReference type="ChEBI" id="CHEBI:29035"/>
        <label>3</label>
    </ligand>
</feature>
<feature type="binding site" evidence="2">
    <location>
        <position position="80"/>
    </location>
    <ligand>
        <name>Mn(2+)</name>
        <dbReference type="ChEBI" id="CHEBI:29035"/>
        <label>1</label>
    </ligand>
</feature>
<feature type="binding site" evidence="1">
    <location>
        <position position="80"/>
    </location>
    <ligand>
        <name>Mn(2+)</name>
        <dbReference type="ChEBI" id="CHEBI:29035"/>
        <label>3</label>
    </ligand>
</feature>
<feature type="binding site" evidence="2">
    <location>
        <position position="99"/>
    </location>
    <ligand>
        <name>Mn(2+)</name>
        <dbReference type="ChEBI" id="CHEBI:29035"/>
        <label>4</label>
    </ligand>
</feature>
<feature type="binding site" evidence="1">
    <location>
        <position position="170"/>
    </location>
    <ligand>
        <name>substrate</name>
    </ligand>
</feature>
<feature type="binding site" evidence="2">
    <location>
        <position position="173"/>
    </location>
    <ligand>
        <name>Mn(2+)</name>
        <dbReference type="ChEBI" id="CHEBI:29035"/>
        <label>4</label>
    </ligand>
</feature>
<feature type="sequence conflict" description="In Ref. 1." evidence="9" ref="1">
    <original>D</original>
    <variation>K</variation>
    <location>
        <position position="193"/>
    </location>
</feature>
<organism>
    <name type="scientific">Mus musculus</name>
    <name type="common">Mouse</name>
    <dbReference type="NCBI Taxonomy" id="10090"/>
    <lineage>
        <taxon>Eukaryota</taxon>
        <taxon>Metazoa</taxon>
        <taxon>Chordata</taxon>
        <taxon>Craniata</taxon>
        <taxon>Vertebrata</taxon>
        <taxon>Euteleostomi</taxon>
        <taxon>Mammalia</taxon>
        <taxon>Eutheria</taxon>
        <taxon>Euarchontoglires</taxon>
        <taxon>Glires</taxon>
        <taxon>Rodentia</taxon>
        <taxon>Myomorpha</taxon>
        <taxon>Muroidea</taxon>
        <taxon>Muridae</taxon>
        <taxon>Murinae</taxon>
        <taxon>Mus</taxon>
        <taxon>Mus</taxon>
    </lineage>
</organism>
<accession>Q6P3D0</accession>
<accession>Q9D716</accession>
<proteinExistence type="evidence at protein level"/>
<evidence type="ECO:0000250" key="1">
    <source>
        <dbReference type="UniProtKB" id="Q6TEC1"/>
    </source>
</evidence>
<evidence type="ECO:0000250" key="2">
    <source>
        <dbReference type="UniProtKB" id="Q96DE0"/>
    </source>
</evidence>
<evidence type="ECO:0000255" key="3">
    <source>
        <dbReference type="PROSITE-ProRule" id="PRU00794"/>
    </source>
</evidence>
<evidence type="ECO:0000269" key="4">
    <source>
    </source>
</evidence>
<evidence type="ECO:0000269" key="5">
    <source>
    </source>
</evidence>
<evidence type="ECO:0000269" key="6">
    <source>
    </source>
</evidence>
<evidence type="ECO:0000269" key="7">
    <source>
    </source>
</evidence>
<evidence type="ECO:0000303" key="8">
    <source>
    </source>
</evidence>
<evidence type="ECO:0000305" key="9"/>
<evidence type="ECO:0000305" key="10">
    <source>
    </source>
</evidence>
<reference key="1">
    <citation type="journal article" date="2005" name="Science">
        <title>The transcriptional landscape of the mammalian genome.</title>
        <authorList>
            <person name="Carninci P."/>
            <person name="Kasukawa T."/>
            <person name="Katayama S."/>
            <person name="Gough J."/>
            <person name="Frith M.C."/>
            <person name="Maeda N."/>
            <person name="Oyama R."/>
            <person name="Ravasi T."/>
            <person name="Lenhard B."/>
            <person name="Wells C."/>
            <person name="Kodzius R."/>
            <person name="Shimokawa K."/>
            <person name="Bajic V.B."/>
            <person name="Brenner S.E."/>
            <person name="Batalov S."/>
            <person name="Forrest A.R."/>
            <person name="Zavolan M."/>
            <person name="Davis M.J."/>
            <person name="Wilming L.G."/>
            <person name="Aidinis V."/>
            <person name="Allen J.E."/>
            <person name="Ambesi-Impiombato A."/>
            <person name="Apweiler R."/>
            <person name="Aturaliya R.N."/>
            <person name="Bailey T.L."/>
            <person name="Bansal M."/>
            <person name="Baxter L."/>
            <person name="Beisel K.W."/>
            <person name="Bersano T."/>
            <person name="Bono H."/>
            <person name="Chalk A.M."/>
            <person name="Chiu K.P."/>
            <person name="Choudhary V."/>
            <person name="Christoffels A."/>
            <person name="Clutterbuck D.R."/>
            <person name="Crowe M.L."/>
            <person name="Dalla E."/>
            <person name="Dalrymple B.P."/>
            <person name="de Bono B."/>
            <person name="Della Gatta G."/>
            <person name="di Bernardo D."/>
            <person name="Down T."/>
            <person name="Engstrom P."/>
            <person name="Fagiolini M."/>
            <person name="Faulkner G."/>
            <person name="Fletcher C.F."/>
            <person name="Fukushima T."/>
            <person name="Furuno M."/>
            <person name="Futaki S."/>
            <person name="Gariboldi M."/>
            <person name="Georgii-Hemming P."/>
            <person name="Gingeras T.R."/>
            <person name="Gojobori T."/>
            <person name="Green R.E."/>
            <person name="Gustincich S."/>
            <person name="Harbers M."/>
            <person name="Hayashi Y."/>
            <person name="Hensch T.K."/>
            <person name="Hirokawa N."/>
            <person name="Hill D."/>
            <person name="Huminiecki L."/>
            <person name="Iacono M."/>
            <person name="Ikeo K."/>
            <person name="Iwama A."/>
            <person name="Ishikawa T."/>
            <person name="Jakt M."/>
            <person name="Kanapin A."/>
            <person name="Katoh M."/>
            <person name="Kawasawa Y."/>
            <person name="Kelso J."/>
            <person name="Kitamura H."/>
            <person name="Kitano H."/>
            <person name="Kollias G."/>
            <person name="Krishnan S.P."/>
            <person name="Kruger A."/>
            <person name="Kummerfeld S.K."/>
            <person name="Kurochkin I.V."/>
            <person name="Lareau L.F."/>
            <person name="Lazarevic D."/>
            <person name="Lipovich L."/>
            <person name="Liu J."/>
            <person name="Liuni S."/>
            <person name="McWilliam S."/>
            <person name="Madan Babu M."/>
            <person name="Madera M."/>
            <person name="Marchionni L."/>
            <person name="Matsuda H."/>
            <person name="Matsuzawa S."/>
            <person name="Miki H."/>
            <person name="Mignone F."/>
            <person name="Miyake S."/>
            <person name="Morris K."/>
            <person name="Mottagui-Tabar S."/>
            <person name="Mulder N."/>
            <person name="Nakano N."/>
            <person name="Nakauchi H."/>
            <person name="Ng P."/>
            <person name="Nilsson R."/>
            <person name="Nishiguchi S."/>
            <person name="Nishikawa S."/>
            <person name="Nori F."/>
            <person name="Ohara O."/>
            <person name="Okazaki Y."/>
            <person name="Orlando V."/>
            <person name="Pang K.C."/>
            <person name="Pavan W.J."/>
            <person name="Pavesi G."/>
            <person name="Pesole G."/>
            <person name="Petrovsky N."/>
            <person name="Piazza S."/>
            <person name="Reed J."/>
            <person name="Reid J.F."/>
            <person name="Ring B.Z."/>
            <person name="Ringwald M."/>
            <person name="Rost B."/>
            <person name="Ruan Y."/>
            <person name="Salzberg S.L."/>
            <person name="Sandelin A."/>
            <person name="Schneider C."/>
            <person name="Schoenbach C."/>
            <person name="Sekiguchi K."/>
            <person name="Semple C.A."/>
            <person name="Seno S."/>
            <person name="Sessa L."/>
            <person name="Sheng Y."/>
            <person name="Shibata Y."/>
            <person name="Shimada H."/>
            <person name="Shimada K."/>
            <person name="Silva D."/>
            <person name="Sinclair B."/>
            <person name="Sperling S."/>
            <person name="Stupka E."/>
            <person name="Sugiura K."/>
            <person name="Sultana R."/>
            <person name="Takenaka Y."/>
            <person name="Taki K."/>
            <person name="Tammoja K."/>
            <person name="Tan S.L."/>
            <person name="Tang S."/>
            <person name="Taylor M.S."/>
            <person name="Tegner J."/>
            <person name="Teichmann S.A."/>
            <person name="Ueda H.R."/>
            <person name="van Nimwegen E."/>
            <person name="Verardo R."/>
            <person name="Wei C.L."/>
            <person name="Yagi K."/>
            <person name="Yamanishi H."/>
            <person name="Zabarovsky E."/>
            <person name="Zhu S."/>
            <person name="Zimmer A."/>
            <person name="Hide W."/>
            <person name="Bult C."/>
            <person name="Grimmond S.M."/>
            <person name="Teasdale R.D."/>
            <person name="Liu E.T."/>
            <person name="Brusic V."/>
            <person name="Quackenbush J."/>
            <person name="Wahlestedt C."/>
            <person name="Mattick J.S."/>
            <person name="Hume D.A."/>
            <person name="Kai C."/>
            <person name="Sasaki D."/>
            <person name="Tomaru Y."/>
            <person name="Fukuda S."/>
            <person name="Kanamori-Katayama M."/>
            <person name="Suzuki M."/>
            <person name="Aoki J."/>
            <person name="Arakawa T."/>
            <person name="Iida J."/>
            <person name="Imamura K."/>
            <person name="Itoh M."/>
            <person name="Kato T."/>
            <person name="Kawaji H."/>
            <person name="Kawagashira N."/>
            <person name="Kawashima T."/>
            <person name="Kojima M."/>
            <person name="Kondo S."/>
            <person name="Konno H."/>
            <person name="Nakano K."/>
            <person name="Ninomiya N."/>
            <person name="Nishio T."/>
            <person name="Okada M."/>
            <person name="Plessy C."/>
            <person name="Shibata K."/>
            <person name="Shiraki T."/>
            <person name="Suzuki S."/>
            <person name="Tagami M."/>
            <person name="Waki K."/>
            <person name="Watahiki A."/>
            <person name="Okamura-Oho Y."/>
            <person name="Suzuki H."/>
            <person name="Kawai J."/>
            <person name="Hayashizaki Y."/>
        </authorList>
    </citation>
    <scope>NUCLEOTIDE SEQUENCE [LARGE SCALE MRNA]</scope>
    <source>
        <strain>C57BL/6J</strain>
        <tissue>Tongue</tissue>
    </source>
</reference>
<reference key="2">
    <citation type="journal article" date="2004" name="Genome Res.">
        <title>The status, quality, and expansion of the NIH full-length cDNA project: the Mammalian Gene Collection (MGC).</title>
        <authorList>
            <consortium name="The MGC Project Team"/>
        </authorList>
    </citation>
    <scope>NUCLEOTIDE SEQUENCE [LARGE SCALE MRNA]</scope>
    <source>
        <strain>C57BL/6J</strain>
        <tissue>Thymus</tissue>
    </source>
</reference>
<reference key="3">
    <citation type="journal article" date="2010" name="Cell">
        <title>A tissue-specific atlas of mouse protein phosphorylation and expression.</title>
        <authorList>
            <person name="Huttlin E.L."/>
            <person name="Jedrychowski M.P."/>
            <person name="Elias J.E."/>
            <person name="Goswami T."/>
            <person name="Rad R."/>
            <person name="Beausoleil S.A."/>
            <person name="Villen J."/>
            <person name="Haas W."/>
            <person name="Sowa M.E."/>
            <person name="Gygi S.P."/>
        </authorList>
    </citation>
    <scope>IDENTIFICATION BY MASS SPECTROMETRY [LARGE SCALE ANALYSIS]</scope>
    <source>
        <tissue>Brain</tissue>
        <tissue>Brown adipose tissue</tissue>
        <tissue>Liver</tissue>
        <tissue>Lung</tissue>
        <tissue>Pancreas</tissue>
        <tissue>Spleen</tissue>
        <tissue>Testis</tissue>
    </source>
</reference>
<reference key="4">
    <citation type="journal article" date="2010" name="Mol. Cell">
        <title>Multiple mRNA decapping enzymes in mammalian cells.</title>
        <authorList>
            <person name="Song M.G."/>
            <person name="Li Y."/>
            <person name="Kiledjian M."/>
        </authorList>
    </citation>
    <scope>FUNCTION IN MRNA DEGRADATION ACTIVITY</scope>
    <scope>TISSUE SPECIFICITY</scope>
</reference>
<reference key="5">
    <citation type="journal article" date="2010" name="Nucleic Acids Res.">
        <title>NUDT16 and ITPA play a dual protective role in maintaining chromosome stability and cell growth by eliminating dIDP/IDP and dITP/ITP from nucleotide pools in mammals.</title>
        <authorList>
            <person name="Abolhassani N."/>
            <person name="Iyama T."/>
            <person name="Tsuchimoto D."/>
            <person name="Sakumi K."/>
            <person name="Ohno M."/>
            <person name="Behmanesh M."/>
            <person name="Nakabeppu Y."/>
        </authorList>
    </citation>
    <scope>FUNCTION AS AN IDP PHOSPHATASE</scope>
</reference>
<reference key="6">
    <citation type="journal article" date="2010" name="Nucleic Acids Res.">
        <title>NUDT16 is a (deoxy)inosine diphosphatase, and its deficiency induces accumulation of single-strand breaks in nuclear DNA and growth arrest.</title>
        <authorList>
            <person name="Iyama T."/>
            <person name="Abolhassani N."/>
            <person name="Tsuchimoto D."/>
            <person name="Nonaka M."/>
            <person name="Nakabeppu Y."/>
        </authorList>
    </citation>
    <scope>FUNCTION AS AN IDP PHOSPHATASE</scope>
    <scope>CATALYTIC ACTIVITY</scope>
</reference>
<reference key="7">
    <citation type="journal article" date="2020" name="Nucleic Acids Res.">
        <title>Mammalian Nudix proteins cleave nucleotide metabolite caps on RNAs.</title>
        <authorList>
            <person name="Sharma S."/>
            <person name="Grudzien-Nogalska E."/>
            <person name="Hamilton K."/>
            <person name="Jiao X."/>
            <person name="Yang J."/>
            <person name="Tong L."/>
            <person name="Kiledjian M."/>
        </authorList>
    </citation>
    <scope>FUNCTION</scope>
    <scope>CATALYTIC ACTIVITY</scope>
</reference>
<dbReference type="EC" id="3.6.1.62" evidence="2"/>
<dbReference type="EC" id="3.6.1.64" evidence="5"/>
<dbReference type="EMBL" id="AK009737">
    <property type="protein sequence ID" value="BAB26469.1"/>
    <property type="status" value="ALT_FRAME"/>
    <property type="molecule type" value="mRNA"/>
</dbReference>
<dbReference type="EMBL" id="BC064048">
    <property type="protein sequence ID" value="AAH64048.1"/>
    <property type="molecule type" value="mRNA"/>
</dbReference>
<dbReference type="CCDS" id="CCDS40751.1"/>
<dbReference type="RefSeq" id="NP_083661.2">
    <property type="nucleotide sequence ID" value="NM_029385.2"/>
</dbReference>
<dbReference type="SMR" id="Q6P3D0"/>
<dbReference type="FunCoup" id="Q6P3D0">
    <property type="interactions" value="1924"/>
</dbReference>
<dbReference type="STRING" id="10090.ENSMUSP00000035179"/>
<dbReference type="iPTMnet" id="Q6P3D0"/>
<dbReference type="PhosphoSitePlus" id="Q6P3D0"/>
<dbReference type="jPOST" id="Q6P3D0"/>
<dbReference type="PaxDb" id="10090-ENSMUSP00000035179"/>
<dbReference type="PeptideAtlas" id="Q6P3D0"/>
<dbReference type="ProteomicsDB" id="295542"/>
<dbReference type="Pumba" id="Q6P3D0"/>
<dbReference type="DNASU" id="75686"/>
<dbReference type="Ensembl" id="ENSMUST00000035179.9">
    <property type="protein sequence ID" value="ENSMUSP00000035179.7"/>
    <property type="gene ID" value="ENSMUSG00000032565.10"/>
</dbReference>
<dbReference type="GeneID" id="75686"/>
<dbReference type="KEGG" id="mmu:75686"/>
<dbReference type="UCSC" id="uc009rhv.1">
    <property type="organism name" value="mouse"/>
</dbReference>
<dbReference type="AGR" id="MGI:1922936"/>
<dbReference type="CTD" id="131870"/>
<dbReference type="MGI" id="MGI:1922936">
    <property type="gene designation" value="Nudt16"/>
</dbReference>
<dbReference type="VEuPathDB" id="HostDB:ENSMUSG00000032565"/>
<dbReference type="eggNOG" id="ENOG502S20E">
    <property type="taxonomic scope" value="Eukaryota"/>
</dbReference>
<dbReference type="GeneTree" id="ENSGT00390000016224"/>
<dbReference type="HOGENOM" id="CLU_110418_0_1_1"/>
<dbReference type="InParanoid" id="Q6P3D0"/>
<dbReference type="OMA" id="VVLMQMR"/>
<dbReference type="OrthoDB" id="5950381at2759"/>
<dbReference type="PhylomeDB" id="Q6P3D0"/>
<dbReference type="BRENDA" id="3.6.1.62">
    <property type="organism ID" value="3474"/>
</dbReference>
<dbReference type="BRENDA" id="3.6.1.64">
    <property type="organism ID" value="3474"/>
</dbReference>
<dbReference type="Reactome" id="R-MMU-2393930">
    <property type="pathway name" value="Phosphate bond hydrolysis by NUDT proteins"/>
</dbReference>
<dbReference type="BioGRID-ORCS" id="75686">
    <property type="hits" value="2 hits in 114 CRISPR screens"/>
</dbReference>
<dbReference type="PRO" id="PR:Q6P3D0"/>
<dbReference type="Proteomes" id="UP000000589">
    <property type="component" value="Chromosome 9"/>
</dbReference>
<dbReference type="RNAct" id="Q6P3D0">
    <property type="molecule type" value="protein"/>
</dbReference>
<dbReference type="Bgee" id="ENSMUSG00000032565">
    <property type="expression patterns" value="Expressed in vestibular membrane of cochlear duct and 220 other cell types or tissues"/>
</dbReference>
<dbReference type="ExpressionAtlas" id="Q6P3D0">
    <property type="expression patterns" value="baseline and differential"/>
</dbReference>
<dbReference type="GO" id="GO:0005737">
    <property type="term" value="C:cytoplasm"/>
    <property type="evidence" value="ECO:0000250"/>
    <property type="project" value="UniProtKB"/>
</dbReference>
<dbReference type="GO" id="GO:0005730">
    <property type="term" value="C:nucleolus"/>
    <property type="evidence" value="ECO:0000250"/>
    <property type="project" value="UniProtKB"/>
</dbReference>
<dbReference type="GO" id="GO:0005654">
    <property type="term" value="C:nucleoplasm"/>
    <property type="evidence" value="ECO:0007669"/>
    <property type="project" value="UniProtKB-SubCell"/>
</dbReference>
<dbReference type="GO" id="GO:0005634">
    <property type="term" value="C:nucleus"/>
    <property type="evidence" value="ECO:0000250"/>
    <property type="project" value="UniProtKB"/>
</dbReference>
<dbReference type="GO" id="GO:0140933">
    <property type="term" value="F:5'-(N(7)-methylguanosine 5'-triphospho)-[mRNA] hydrolase activity"/>
    <property type="evidence" value="ECO:0000250"/>
    <property type="project" value="UniProtKB"/>
</dbReference>
<dbReference type="GO" id="GO:0050897">
    <property type="term" value="F:cobalt ion binding"/>
    <property type="evidence" value="ECO:0000250"/>
    <property type="project" value="UniProtKB"/>
</dbReference>
<dbReference type="GO" id="GO:0097383">
    <property type="term" value="F:dIDP phosphatase activity"/>
    <property type="evidence" value="ECO:0000314"/>
    <property type="project" value="UniProtKB"/>
</dbReference>
<dbReference type="GO" id="GO:0035870">
    <property type="term" value="F:dITP diphosphatase activity"/>
    <property type="evidence" value="ECO:0000315"/>
    <property type="project" value="MGI"/>
</dbReference>
<dbReference type="GO" id="GO:1990003">
    <property type="term" value="F:IDP phosphatase activity"/>
    <property type="evidence" value="ECO:0007669"/>
    <property type="project" value="UniProtKB-EC"/>
</dbReference>
<dbReference type="GO" id="GO:0000287">
    <property type="term" value="F:magnesium ion binding"/>
    <property type="evidence" value="ECO:0000250"/>
    <property type="project" value="UniProtKB"/>
</dbReference>
<dbReference type="GO" id="GO:0030145">
    <property type="term" value="F:manganese ion binding"/>
    <property type="evidence" value="ECO:0000250"/>
    <property type="project" value="UniProtKB"/>
</dbReference>
<dbReference type="GO" id="GO:0008235">
    <property type="term" value="F:metalloexopeptidase activity"/>
    <property type="evidence" value="ECO:0000250"/>
    <property type="project" value="UniProtKB"/>
</dbReference>
<dbReference type="GO" id="GO:0003729">
    <property type="term" value="F:mRNA binding"/>
    <property type="evidence" value="ECO:0000250"/>
    <property type="project" value="UniProtKB"/>
</dbReference>
<dbReference type="GO" id="GO:0000166">
    <property type="term" value="F:nucleotide binding"/>
    <property type="evidence" value="ECO:0007669"/>
    <property type="project" value="UniProtKB-KW"/>
</dbReference>
<dbReference type="GO" id="GO:0042803">
    <property type="term" value="F:protein homodimerization activity"/>
    <property type="evidence" value="ECO:0000250"/>
    <property type="project" value="UniProtKB"/>
</dbReference>
<dbReference type="GO" id="GO:0110152">
    <property type="term" value="F:RNA NAD+-cap (NAD+-forming) hydrolase activity"/>
    <property type="evidence" value="ECO:0007669"/>
    <property type="project" value="RHEA"/>
</dbReference>
<dbReference type="GO" id="GO:0030515">
    <property type="term" value="F:snoRNA binding"/>
    <property type="evidence" value="ECO:0000250"/>
    <property type="project" value="UniProtKB"/>
</dbReference>
<dbReference type="GO" id="GO:0051276">
    <property type="term" value="P:chromosome organization"/>
    <property type="evidence" value="ECO:0000316"/>
    <property type="project" value="MGI"/>
</dbReference>
<dbReference type="GO" id="GO:0035863">
    <property type="term" value="P:dITP catabolic process"/>
    <property type="evidence" value="ECO:0000316"/>
    <property type="project" value="MGI"/>
</dbReference>
<dbReference type="GO" id="GO:0006402">
    <property type="term" value="P:mRNA catabolic process"/>
    <property type="evidence" value="ECO:0000315"/>
    <property type="project" value="UniProtKB"/>
</dbReference>
<dbReference type="GO" id="GO:0110155">
    <property type="term" value="P:NAD-cap decapping"/>
    <property type="evidence" value="ECO:0000250"/>
    <property type="project" value="UniProtKB"/>
</dbReference>
<dbReference type="GO" id="GO:2000233">
    <property type="term" value="P:negative regulation of rRNA processing"/>
    <property type="evidence" value="ECO:0000250"/>
    <property type="project" value="UniProtKB"/>
</dbReference>
<dbReference type="GO" id="GO:0090068">
    <property type="term" value="P:positive regulation of cell cycle process"/>
    <property type="evidence" value="ECO:0000250"/>
    <property type="project" value="UniProtKB"/>
</dbReference>
<dbReference type="GO" id="GO:0016077">
    <property type="term" value="P:sno(s)RNA catabolic process"/>
    <property type="evidence" value="ECO:0000250"/>
    <property type="project" value="UniProtKB"/>
</dbReference>
<dbReference type="CDD" id="cd18869">
    <property type="entry name" value="NUDIX_U8_SnoRNA_DE_Nudt16"/>
    <property type="match status" value="1"/>
</dbReference>
<dbReference type="FunFam" id="3.90.79.10:FF:000055">
    <property type="entry name" value="U8 snoRNA-decapping enzyme"/>
    <property type="match status" value="1"/>
</dbReference>
<dbReference type="Gene3D" id="3.90.79.10">
    <property type="entry name" value="Nucleoside Triphosphate Pyrophosphohydrolase"/>
    <property type="match status" value="1"/>
</dbReference>
<dbReference type="InterPro" id="IPR015797">
    <property type="entry name" value="NUDIX_hydrolase-like_dom_sf"/>
</dbReference>
<dbReference type="InterPro" id="IPR000086">
    <property type="entry name" value="NUDIX_hydrolase_dom"/>
</dbReference>
<dbReference type="InterPro" id="IPR054754">
    <property type="entry name" value="NudT16"/>
</dbReference>
<dbReference type="PANTHER" id="PTHR31699">
    <property type="entry name" value="NUDIX T16 FAMILY MEMBER"/>
    <property type="match status" value="1"/>
</dbReference>
<dbReference type="PANTHER" id="PTHR31699:SF5">
    <property type="entry name" value="U8 SNORNA-DECAPPING ENZYME"/>
    <property type="match status" value="1"/>
</dbReference>
<dbReference type="Pfam" id="PF22327">
    <property type="entry name" value="Nudt16-like"/>
    <property type="match status" value="1"/>
</dbReference>
<dbReference type="SUPFAM" id="SSF55811">
    <property type="entry name" value="Nudix"/>
    <property type="match status" value="1"/>
</dbReference>
<dbReference type="PROSITE" id="PS51462">
    <property type="entry name" value="NUDIX"/>
    <property type="match status" value="1"/>
</dbReference>
<protein>
    <recommendedName>
        <fullName>U8 snoRNA-decapping enzyme</fullName>
        <ecNumber evidence="2">3.6.1.62</ecNumber>
    </recommendedName>
    <alternativeName>
        <fullName evidence="8">IDP phosphatase</fullName>
        <shortName>IDPase</shortName>
        <ecNumber evidence="5">3.6.1.64</ecNumber>
    </alternativeName>
    <alternativeName>
        <fullName>Inosine diphosphate phosphatase</fullName>
    </alternativeName>
    <alternativeName>
        <fullName>Nucleoside diphosphate-linked moiety X motif 16</fullName>
        <shortName>Nudix motif 16</shortName>
    </alternativeName>
    <alternativeName>
        <fullName>m7GpppN-mRNA hydrolase</fullName>
    </alternativeName>
</protein>
<comment type="function">
    <text evidence="2 4 5 6 7">RNA-binding and decapping enzyme that catalyzes the cleavage of the cap structure of snoRNAs and mRNAs in a metal-dependent manner. Part of the U8 snoRNP complex that is required for the accumulation of mature 5.8S and 28S rRNA. Has diphosphatase activity and removes m7G and/or m227G caps from U8 snoRNA and leaves a 5'monophosphate on the RNA. Also catalyzes the cleavage of the cap structure on mRNAs. Does not hydrolyze cap analog structures like 7-methylguanosine nucleoside triphosphate (m7GpppG). Also hydrolysis m7G- and m227G U3-capped RNAs but with less efficiencies. Has broad substrate specificity with manganese or cobalt as cofactor and can act on various RNA species. Binds to the U8 snoRNA; metal is not required for RNA-binding. May play a role in the regulation of snoRNAs and mRNAs degradation (By similarity). Also acts as a phosphatase; hydrolyzes the non-canonical purine nucleotides inosine diphosphate (IDP) and deoxyinosine diphosphate (dITP) as well as guanosine diphosphate (GDP), deoxyguanosine diphosphate (dGDP), xanthine diphosphate (XDP), inosine triphosphate (ITP) and deoxyinosine triphosphate (ITP) to their respective monophosphate derivatives and does not distinguish between the deoxy- and ribose forms. The order of activity with different substrates is IDP &gt; dIDP &gt;&gt; GDP = dGDP &gt; XDP = ITP = dITP. Binds strongly to GTP, ITP and XTP. Participates in the hydrolysis of dIDP/IDP and probably excludes non-canonical purines from RNA and DNA precursor pools, thus preventing their incorporation into RNA and DNA and avoiding chromosomal lesions. Exhibits decapping activity towards NAD-capped RNAs and FAD-capped RNAs (By similarity). Exhibits decapping activity towards dpCoA-capped RNAs in vitro (PubMed:32432673).</text>
</comment>
<comment type="catalytic activity">
    <reaction evidence="2">
        <text>a 5'-end (N(7)-methyl 5'-triphosphoguanosine)-ribonucleoside in mRNA + H2O = N(7)-methyl-GDP + a 5'-end phospho-ribonucleoside in mRNA + 2 H(+)</text>
        <dbReference type="Rhea" id="RHEA:67484"/>
        <dbReference type="Rhea" id="RHEA-COMP:15692"/>
        <dbReference type="Rhea" id="RHEA-COMP:17167"/>
        <dbReference type="ChEBI" id="CHEBI:15377"/>
        <dbReference type="ChEBI" id="CHEBI:15378"/>
        <dbReference type="ChEBI" id="CHEBI:63714"/>
        <dbReference type="ChEBI" id="CHEBI:138282"/>
        <dbReference type="ChEBI" id="CHEBI:156461"/>
        <dbReference type="EC" id="3.6.1.62"/>
    </reaction>
    <physiologicalReaction direction="left-to-right" evidence="2">
        <dbReference type="Rhea" id="RHEA:67485"/>
    </physiologicalReaction>
</comment>
<comment type="catalytic activity">
    <reaction evidence="5">
        <text>IDP + H2O = IMP + phosphate + H(+)</text>
        <dbReference type="Rhea" id="RHEA:35207"/>
        <dbReference type="ChEBI" id="CHEBI:15377"/>
        <dbReference type="ChEBI" id="CHEBI:15378"/>
        <dbReference type="ChEBI" id="CHEBI:43474"/>
        <dbReference type="ChEBI" id="CHEBI:58053"/>
        <dbReference type="ChEBI" id="CHEBI:58280"/>
        <dbReference type="EC" id="3.6.1.64"/>
    </reaction>
    <physiologicalReaction direction="left-to-right" evidence="5">
        <dbReference type="Rhea" id="RHEA:35208"/>
    </physiologicalReaction>
</comment>
<comment type="catalytic activity">
    <reaction evidence="5">
        <text>dIDP + H2O = dIMP + phosphate + H(+)</text>
        <dbReference type="Rhea" id="RHEA:35211"/>
        <dbReference type="ChEBI" id="CHEBI:15377"/>
        <dbReference type="ChEBI" id="CHEBI:15378"/>
        <dbReference type="ChEBI" id="CHEBI:43474"/>
        <dbReference type="ChEBI" id="CHEBI:61194"/>
        <dbReference type="ChEBI" id="CHEBI:62286"/>
        <dbReference type="EC" id="3.6.1.64"/>
    </reaction>
    <physiologicalReaction direction="left-to-right" evidence="5">
        <dbReference type="Rhea" id="RHEA:35212"/>
    </physiologicalReaction>
</comment>
<comment type="catalytic activity">
    <reaction evidence="2">
        <text>a 5'-end NAD(+)-phospho-ribonucleoside in mRNA + H2O = a 5'-end phospho-ribonucleoside in mRNA + NAD(+) + H(+)</text>
        <dbReference type="Rhea" id="RHEA:60880"/>
        <dbReference type="Rhea" id="RHEA-COMP:15692"/>
        <dbReference type="Rhea" id="RHEA-COMP:15698"/>
        <dbReference type="ChEBI" id="CHEBI:15377"/>
        <dbReference type="ChEBI" id="CHEBI:15378"/>
        <dbReference type="ChEBI" id="CHEBI:57540"/>
        <dbReference type="ChEBI" id="CHEBI:138282"/>
        <dbReference type="ChEBI" id="CHEBI:144029"/>
    </reaction>
    <physiologicalReaction direction="left-to-right" evidence="2">
        <dbReference type="Rhea" id="RHEA:60881"/>
    </physiologicalReaction>
</comment>
<comment type="catalytic activity">
    <reaction evidence="2">
        <text>a 5'-end FAD-phospho-ribonucleoside in mRNA + H2O = a 5'-end phospho-adenosine-phospho-ribonucleoside in mRNA + FMN + 2 H(+)</text>
        <dbReference type="Rhea" id="RHEA:67588"/>
        <dbReference type="Rhea" id="RHEA-COMP:15719"/>
        <dbReference type="Rhea" id="RHEA-COMP:17275"/>
        <dbReference type="ChEBI" id="CHEBI:15377"/>
        <dbReference type="ChEBI" id="CHEBI:15378"/>
        <dbReference type="ChEBI" id="CHEBI:58210"/>
        <dbReference type="ChEBI" id="CHEBI:144051"/>
        <dbReference type="ChEBI" id="CHEBI:172372"/>
    </reaction>
    <physiologicalReaction direction="left-to-right" evidence="2">
        <dbReference type="Rhea" id="RHEA:67589"/>
    </physiologicalReaction>
</comment>
<comment type="catalytic activity">
    <reaction evidence="10">
        <text>a 5'-end CoA-ribonucleoside in mRNA + H2O = a 5'-end phospho-adenosine-phospho-ribonucleoside in mRNA + (R)-4'-phosphopantetheine + 2 H(+)</text>
        <dbReference type="Rhea" id="RHEA:67592"/>
        <dbReference type="Rhea" id="RHEA-COMP:15719"/>
        <dbReference type="Rhea" id="RHEA-COMP:17276"/>
        <dbReference type="ChEBI" id="CHEBI:15377"/>
        <dbReference type="ChEBI" id="CHEBI:15378"/>
        <dbReference type="ChEBI" id="CHEBI:61723"/>
        <dbReference type="ChEBI" id="CHEBI:144051"/>
        <dbReference type="ChEBI" id="CHEBI:172371"/>
    </reaction>
    <physiologicalReaction direction="left-to-right" evidence="10">
        <dbReference type="Rhea" id="RHEA:67593"/>
    </physiologicalReaction>
</comment>
<comment type="cofactor">
    <cofactor evidence="2">
        <name>Mg(2+)</name>
        <dbReference type="ChEBI" id="CHEBI:18420"/>
    </cofactor>
    <cofactor evidence="2">
        <name>Mn(2+)</name>
        <dbReference type="ChEBI" id="CHEBI:29035"/>
    </cofactor>
    <cofactor evidence="2">
        <name>Co(2+)</name>
        <dbReference type="ChEBI" id="CHEBI:48828"/>
    </cofactor>
    <text evidence="2">Binds 3 or 4 divalent metal cations. Acts specifically on U8 snoRNA with magnesium as cofactor. Has broad substrate specificity with bound manganese or cobalt (in vitro).</text>
</comment>
<comment type="subunit">
    <text evidence="2">Homodimer.</text>
</comment>
<comment type="subcellular location">
    <subcellularLocation>
        <location evidence="2">Nucleus</location>
    </subcellularLocation>
    <subcellularLocation>
        <location evidence="1">Nucleus</location>
        <location evidence="1">Nucleolus</location>
    </subcellularLocation>
    <subcellularLocation>
        <location evidence="1">Nucleus</location>
        <location evidence="1">Nucleoplasm</location>
    </subcellularLocation>
    <subcellularLocation>
        <location evidence="2">Cytoplasm</location>
    </subcellularLocation>
    <text evidence="1 2">Localized predominantly in the cytoplasm. Localized in nucleolus, and in a minor proportion in distinct foci in the nucleoplasm.</text>
</comment>
<comment type="tissue specificity">
    <text evidence="6">Expressed in brain, testis, spleen, lung, heart, liver, kidney and muscle (at protein level).</text>
</comment>
<comment type="similarity">
    <text evidence="9">Belongs to the Nudix hydrolase family. NUDT16 subfamily.</text>
</comment>
<comment type="sequence caution" evidence="9">
    <conflict type="frameshift">
        <sequence resource="EMBL-CDS" id="BAB26469"/>
    </conflict>
</comment>